<comment type="function">
    <text evidence="1">Converts heme B (protoheme IX) to heme O by substitution of the vinyl group on carbon 2 of heme B porphyrin ring with a hydroxyethyl farnesyl side group.</text>
</comment>
<comment type="catalytic activity">
    <reaction evidence="1">
        <text>heme b + (2E,6E)-farnesyl diphosphate + H2O = Fe(II)-heme o + diphosphate</text>
        <dbReference type="Rhea" id="RHEA:28070"/>
        <dbReference type="ChEBI" id="CHEBI:15377"/>
        <dbReference type="ChEBI" id="CHEBI:33019"/>
        <dbReference type="ChEBI" id="CHEBI:60344"/>
        <dbReference type="ChEBI" id="CHEBI:60530"/>
        <dbReference type="ChEBI" id="CHEBI:175763"/>
        <dbReference type="EC" id="2.5.1.141"/>
    </reaction>
</comment>
<comment type="pathway">
    <text evidence="1">Porphyrin-containing compound metabolism; heme O biosynthesis; heme O from protoheme: step 1/1.</text>
</comment>
<comment type="subunit">
    <text evidence="1">Interacts with CtaA.</text>
</comment>
<comment type="subcellular location">
    <subcellularLocation>
        <location evidence="1">Cell membrane</location>
        <topology evidence="1">Multi-pass membrane protein</topology>
    </subcellularLocation>
</comment>
<comment type="miscellaneous">
    <text evidence="1">Carbon 2 of the heme B porphyrin ring is defined according to the Fischer nomenclature.</text>
</comment>
<comment type="similarity">
    <text evidence="1">Belongs to the UbiA prenyltransferase family. Protoheme IX farnesyltransferase subfamily.</text>
</comment>
<reference key="1">
    <citation type="journal article" date="2003" name="Nature">
        <title>The genome sequence of Bacillus anthracis Ames and comparison to closely related bacteria.</title>
        <authorList>
            <person name="Read T.D."/>
            <person name="Peterson S.N."/>
            <person name="Tourasse N.J."/>
            <person name="Baillie L.W."/>
            <person name="Paulsen I.T."/>
            <person name="Nelson K.E."/>
            <person name="Tettelin H."/>
            <person name="Fouts D.E."/>
            <person name="Eisen J.A."/>
            <person name="Gill S.R."/>
            <person name="Holtzapple E.K."/>
            <person name="Okstad O.A."/>
            <person name="Helgason E."/>
            <person name="Rilstone J."/>
            <person name="Wu M."/>
            <person name="Kolonay J.F."/>
            <person name="Beanan M.J."/>
            <person name="Dodson R.J."/>
            <person name="Brinkac L.M."/>
            <person name="Gwinn M.L."/>
            <person name="DeBoy R.T."/>
            <person name="Madpu R."/>
            <person name="Daugherty S.C."/>
            <person name="Durkin A.S."/>
            <person name="Haft D.H."/>
            <person name="Nelson W.C."/>
            <person name="Peterson J.D."/>
            <person name="Pop M."/>
            <person name="Khouri H.M."/>
            <person name="Radune D."/>
            <person name="Benton J.L."/>
            <person name="Mahamoud Y."/>
            <person name="Jiang L."/>
            <person name="Hance I.R."/>
            <person name="Weidman J.F."/>
            <person name="Berry K.J."/>
            <person name="Plaut R.D."/>
            <person name="Wolf A.M."/>
            <person name="Watkins K.L."/>
            <person name="Nierman W.C."/>
            <person name="Hazen A."/>
            <person name="Cline R.T."/>
            <person name="Redmond C."/>
            <person name="Thwaite J.E."/>
            <person name="White O."/>
            <person name="Salzberg S.L."/>
            <person name="Thomason B."/>
            <person name="Friedlander A.M."/>
            <person name="Koehler T.M."/>
            <person name="Hanna P.C."/>
            <person name="Kolstoe A.-B."/>
            <person name="Fraser C.M."/>
        </authorList>
    </citation>
    <scope>NUCLEOTIDE SEQUENCE [LARGE SCALE GENOMIC DNA]</scope>
    <source>
        <strain>Ames / isolate Porton</strain>
    </source>
</reference>
<reference key="2">
    <citation type="submission" date="2004-01" db="EMBL/GenBank/DDBJ databases">
        <title>Complete genome sequence of Bacillus anthracis Sterne.</title>
        <authorList>
            <person name="Brettin T.S."/>
            <person name="Bruce D."/>
            <person name="Challacombe J.F."/>
            <person name="Gilna P."/>
            <person name="Han C."/>
            <person name="Hill K."/>
            <person name="Hitchcock P."/>
            <person name="Jackson P."/>
            <person name="Keim P."/>
            <person name="Longmire J."/>
            <person name="Lucas S."/>
            <person name="Okinaka R."/>
            <person name="Richardson P."/>
            <person name="Rubin E."/>
            <person name="Tice H."/>
        </authorList>
    </citation>
    <scope>NUCLEOTIDE SEQUENCE [LARGE SCALE GENOMIC DNA]</scope>
    <source>
        <strain>Sterne</strain>
    </source>
</reference>
<reference key="3">
    <citation type="journal article" date="2009" name="J. Bacteriol.">
        <title>The complete genome sequence of Bacillus anthracis Ames 'Ancestor'.</title>
        <authorList>
            <person name="Ravel J."/>
            <person name="Jiang L."/>
            <person name="Stanley S.T."/>
            <person name="Wilson M.R."/>
            <person name="Decker R.S."/>
            <person name="Read T.D."/>
            <person name="Worsham P."/>
            <person name="Keim P.S."/>
            <person name="Salzberg S.L."/>
            <person name="Fraser-Liggett C.M."/>
            <person name="Rasko D.A."/>
        </authorList>
    </citation>
    <scope>NUCLEOTIDE SEQUENCE [LARGE SCALE GENOMIC DNA]</scope>
    <source>
        <strain>Ames ancestor</strain>
    </source>
</reference>
<feature type="chain" id="PRO_0000327001" description="Protoheme IX farnesyltransferase">
    <location>
        <begin position="1"/>
        <end position="307"/>
    </location>
</feature>
<feature type="transmembrane region" description="Helical" evidence="1">
    <location>
        <begin position="32"/>
        <end position="52"/>
    </location>
</feature>
<feature type="transmembrane region" description="Helical" evidence="1">
    <location>
        <begin position="65"/>
        <end position="85"/>
    </location>
</feature>
<feature type="transmembrane region" description="Helical" evidence="1">
    <location>
        <begin position="108"/>
        <end position="128"/>
    </location>
</feature>
<feature type="transmembrane region" description="Helical" evidence="1">
    <location>
        <begin position="131"/>
        <end position="151"/>
    </location>
</feature>
<feature type="transmembrane region" description="Helical" evidence="1">
    <location>
        <begin position="158"/>
        <end position="178"/>
    </location>
</feature>
<feature type="transmembrane region" description="Helical" evidence="1">
    <location>
        <begin position="186"/>
        <end position="206"/>
    </location>
</feature>
<feature type="transmembrane region" description="Helical" evidence="1">
    <location>
        <begin position="251"/>
        <end position="271"/>
    </location>
</feature>
<feature type="transmembrane region" description="Helical" evidence="1">
    <location>
        <begin position="287"/>
        <end position="307"/>
    </location>
</feature>
<organism>
    <name type="scientific">Bacillus anthracis</name>
    <dbReference type="NCBI Taxonomy" id="1392"/>
    <lineage>
        <taxon>Bacteria</taxon>
        <taxon>Bacillati</taxon>
        <taxon>Bacillota</taxon>
        <taxon>Bacilli</taxon>
        <taxon>Bacillales</taxon>
        <taxon>Bacillaceae</taxon>
        <taxon>Bacillus</taxon>
        <taxon>Bacillus cereus group</taxon>
    </lineage>
</organism>
<proteinExistence type="inferred from homology"/>
<accession>Q81MT8</accession>
<accession>Q6HU81</accession>
<accession>Q6KNG5</accession>
<keyword id="KW-1003">Cell membrane</keyword>
<keyword id="KW-0350">Heme biosynthesis</keyword>
<keyword id="KW-0472">Membrane</keyword>
<keyword id="KW-1185">Reference proteome</keyword>
<keyword id="KW-0808">Transferase</keyword>
<keyword id="KW-0812">Transmembrane</keyword>
<keyword id="KW-1133">Transmembrane helix</keyword>
<protein>
    <recommendedName>
        <fullName evidence="1">Protoheme IX farnesyltransferase</fullName>
        <ecNumber evidence="1">2.5.1.141</ecNumber>
    </recommendedName>
    <alternativeName>
        <fullName evidence="1">Heme B farnesyltransferase</fullName>
    </alternativeName>
    <alternativeName>
        <fullName evidence="1">Heme O synthase</fullName>
    </alternativeName>
</protein>
<evidence type="ECO:0000255" key="1">
    <source>
        <dbReference type="HAMAP-Rule" id="MF_00154"/>
    </source>
</evidence>
<gene>
    <name evidence="1" type="primary">ctaB</name>
    <name type="ordered locus">BA_4155</name>
    <name type="ordered locus">GBAA_4155</name>
    <name type="ordered locus">BAS3857</name>
</gene>
<name>COXX_BACAN</name>
<sequence length="307" mass="34549">MNHATSELHDESAVTSIPETTRLQDLKALVKMGIVNSNTLTVFTGFWLALHFNGLSVMDNLDKLFFTIVGSGLVMAGVCCLNNYIDRDIDPLMERTKTRPTVTGKYKPGFALTFGLVILLLGFVFLLLTTPMAVLMGFIGAFTYVVLYSLWTKRKYTLNTVVGSISGAVPPLIGWAAIDPSLGHPIAWMLFLIMFIWQIPHFLALAMKRVDEYRNAGIPMLPVVHGFEITKRQIMIWTVCLLPLPFYMSGLGITFMVIATLLNIGWIVLGFYGFRKKDDIKWSVQMFVYSLNYLTILFVSMIVVTFF</sequence>
<dbReference type="EC" id="2.5.1.141" evidence="1"/>
<dbReference type="EMBL" id="AE016879">
    <property type="protein sequence ID" value="AAP27879.1"/>
    <property type="molecule type" value="Genomic_DNA"/>
</dbReference>
<dbReference type="EMBL" id="AE017334">
    <property type="protein sequence ID" value="AAT33277.1"/>
    <property type="molecule type" value="Genomic_DNA"/>
</dbReference>
<dbReference type="EMBL" id="AE017225">
    <property type="protein sequence ID" value="AAT56158.1"/>
    <property type="molecule type" value="Genomic_DNA"/>
</dbReference>
<dbReference type="RefSeq" id="NP_846393.1">
    <property type="nucleotide sequence ID" value="NC_003997.3"/>
</dbReference>
<dbReference type="RefSeq" id="WP_001015052.1">
    <property type="nucleotide sequence ID" value="NZ_WXXJ01000027.1"/>
</dbReference>
<dbReference type="RefSeq" id="YP_030107.1">
    <property type="nucleotide sequence ID" value="NC_005945.1"/>
</dbReference>
<dbReference type="SMR" id="Q81MT8"/>
<dbReference type="STRING" id="261594.GBAA_4155"/>
<dbReference type="DNASU" id="1088962"/>
<dbReference type="GeneID" id="45023832"/>
<dbReference type="KEGG" id="ban:BA_4155"/>
<dbReference type="KEGG" id="bar:GBAA_4155"/>
<dbReference type="KEGG" id="bat:BAS3857"/>
<dbReference type="PATRIC" id="fig|198094.11.peg.4126"/>
<dbReference type="eggNOG" id="COG0109">
    <property type="taxonomic scope" value="Bacteria"/>
</dbReference>
<dbReference type="HOGENOM" id="CLU_029631_0_0_9"/>
<dbReference type="OMA" id="HFWAIGW"/>
<dbReference type="OrthoDB" id="9814417at2"/>
<dbReference type="UniPathway" id="UPA00834">
    <property type="reaction ID" value="UER00712"/>
</dbReference>
<dbReference type="Proteomes" id="UP000000427">
    <property type="component" value="Chromosome"/>
</dbReference>
<dbReference type="Proteomes" id="UP000000594">
    <property type="component" value="Chromosome"/>
</dbReference>
<dbReference type="GO" id="GO:0005886">
    <property type="term" value="C:plasma membrane"/>
    <property type="evidence" value="ECO:0007669"/>
    <property type="project" value="UniProtKB-SubCell"/>
</dbReference>
<dbReference type="GO" id="GO:0008495">
    <property type="term" value="F:protoheme IX farnesyltransferase activity"/>
    <property type="evidence" value="ECO:0007669"/>
    <property type="project" value="UniProtKB-UniRule"/>
</dbReference>
<dbReference type="GO" id="GO:0048034">
    <property type="term" value="P:heme O biosynthetic process"/>
    <property type="evidence" value="ECO:0007669"/>
    <property type="project" value="UniProtKB-UniRule"/>
</dbReference>
<dbReference type="CDD" id="cd13957">
    <property type="entry name" value="PT_UbiA_Cox10"/>
    <property type="match status" value="1"/>
</dbReference>
<dbReference type="FunFam" id="1.10.357.140:FF:000001">
    <property type="entry name" value="Protoheme IX farnesyltransferase"/>
    <property type="match status" value="1"/>
</dbReference>
<dbReference type="Gene3D" id="1.10.357.140">
    <property type="entry name" value="UbiA prenyltransferase"/>
    <property type="match status" value="1"/>
</dbReference>
<dbReference type="HAMAP" id="MF_00154">
    <property type="entry name" value="CyoE_CtaB"/>
    <property type="match status" value="1"/>
</dbReference>
<dbReference type="InterPro" id="IPR006369">
    <property type="entry name" value="Protohaem_IX_farnesylTrfase"/>
</dbReference>
<dbReference type="InterPro" id="IPR000537">
    <property type="entry name" value="UbiA_prenyltransferase"/>
</dbReference>
<dbReference type="InterPro" id="IPR030470">
    <property type="entry name" value="UbiA_prenylTrfase_CS"/>
</dbReference>
<dbReference type="InterPro" id="IPR044878">
    <property type="entry name" value="UbiA_sf"/>
</dbReference>
<dbReference type="NCBIfam" id="TIGR01473">
    <property type="entry name" value="cyoE_ctaB"/>
    <property type="match status" value="1"/>
</dbReference>
<dbReference type="PANTHER" id="PTHR43448">
    <property type="entry name" value="PROTOHEME IX FARNESYLTRANSFERASE, MITOCHONDRIAL"/>
    <property type="match status" value="1"/>
</dbReference>
<dbReference type="PANTHER" id="PTHR43448:SF2">
    <property type="entry name" value="PROTOHEME IX FARNESYLTRANSFERASE, MITOCHONDRIAL"/>
    <property type="match status" value="1"/>
</dbReference>
<dbReference type="Pfam" id="PF01040">
    <property type="entry name" value="UbiA"/>
    <property type="match status" value="1"/>
</dbReference>
<dbReference type="PROSITE" id="PS00943">
    <property type="entry name" value="UBIA"/>
    <property type="match status" value="1"/>
</dbReference>